<keyword id="KW-1003">Cell membrane</keyword>
<keyword id="KW-0472">Membrane</keyword>
<keyword id="KW-1185">Reference proteome</keyword>
<keyword id="KW-0812">Transmembrane</keyword>
<keyword id="KW-1133">Transmembrane helix</keyword>
<name>Y2434_SYNC1</name>
<gene>
    <name type="ordered locus">Pcar_2434</name>
</gene>
<protein>
    <recommendedName>
        <fullName evidence="1">UPF0316 protein Pcar_2434</fullName>
    </recommendedName>
</protein>
<reference key="1">
    <citation type="submission" date="2005-10" db="EMBL/GenBank/DDBJ databases">
        <title>Complete sequence of Pelobacter carbinolicus DSM 2380.</title>
        <authorList>
            <person name="Copeland A."/>
            <person name="Lucas S."/>
            <person name="Lapidus A."/>
            <person name="Barry K."/>
            <person name="Detter J.C."/>
            <person name="Glavina T."/>
            <person name="Hammon N."/>
            <person name="Israni S."/>
            <person name="Pitluck S."/>
            <person name="Chertkov O."/>
            <person name="Schmutz J."/>
            <person name="Larimer F."/>
            <person name="Land M."/>
            <person name="Kyrpides N."/>
            <person name="Ivanova N."/>
            <person name="Richardson P."/>
        </authorList>
    </citation>
    <scope>NUCLEOTIDE SEQUENCE [LARGE SCALE GENOMIC DNA]</scope>
    <source>
        <strain>DSM 2380 / NBRC 103641 / GraBd1</strain>
    </source>
</reference>
<accession>Q3A1T4</accession>
<proteinExistence type="inferred from homology"/>
<sequence>MTFALPDNATLSLFLLPLLVFFARIIDVSIGTLRIIFVARSLKGWAGVLGFFESLIWVLAISQVMQNLTNVWTYIAFALGFATGNYVGVLIEERIAIGSLIVRIITRKDATVLTEHLWKAGYGVTNLQAHGETGPVRLIFTVCRRRDVKDVLRMVKQFNPRAFYTIEDVRFVQDNLPVVPRRHGIMSRLALRNRK</sequence>
<feature type="chain" id="PRO_0000250348" description="UPF0316 protein Pcar_2434">
    <location>
        <begin position="1"/>
        <end position="195"/>
    </location>
</feature>
<feature type="transmembrane region" description="Helical" evidence="1">
    <location>
        <begin position="13"/>
        <end position="33"/>
    </location>
</feature>
<feature type="transmembrane region" description="Helical" evidence="1">
    <location>
        <begin position="45"/>
        <end position="65"/>
    </location>
</feature>
<feature type="transmembrane region" description="Helical" evidence="1">
    <location>
        <begin position="71"/>
        <end position="91"/>
    </location>
</feature>
<evidence type="ECO:0000255" key="1">
    <source>
        <dbReference type="HAMAP-Rule" id="MF_01515"/>
    </source>
</evidence>
<dbReference type="EMBL" id="CP000142">
    <property type="protein sequence ID" value="ABA89673.1"/>
    <property type="molecule type" value="Genomic_DNA"/>
</dbReference>
<dbReference type="RefSeq" id="WP_011342199.1">
    <property type="nucleotide sequence ID" value="NC_007498.2"/>
</dbReference>
<dbReference type="SMR" id="Q3A1T4"/>
<dbReference type="STRING" id="338963.Pcar_2434"/>
<dbReference type="KEGG" id="pca:Pcar_2434"/>
<dbReference type="eggNOG" id="COG4843">
    <property type="taxonomic scope" value="Bacteria"/>
</dbReference>
<dbReference type="HOGENOM" id="CLU_106166_0_0_7"/>
<dbReference type="OrthoDB" id="48231at2"/>
<dbReference type="Proteomes" id="UP000002534">
    <property type="component" value="Chromosome"/>
</dbReference>
<dbReference type="GO" id="GO:0005886">
    <property type="term" value="C:plasma membrane"/>
    <property type="evidence" value="ECO:0007669"/>
    <property type="project" value="UniProtKB-SubCell"/>
</dbReference>
<dbReference type="CDD" id="cd16381">
    <property type="entry name" value="YitT_C_like_1"/>
    <property type="match status" value="1"/>
</dbReference>
<dbReference type="Gene3D" id="3.30.70.120">
    <property type="match status" value="1"/>
</dbReference>
<dbReference type="HAMAP" id="MF_01515">
    <property type="entry name" value="UPF0316"/>
    <property type="match status" value="1"/>
</dbReference>
<dbReference type="InterPro" id="IPR019264">
    <property type="entry name" value="DUF2179"/>
</dbReference>
<dbReference type="InterPro" id="IPR044035">
    <property type="entry name" value="DUF5698"/>
</dbReference>
<dbReference type="InterPro" id="IPR015867">
    <property type="entry name" value="N-reg_PII/ATP_PRibTrfase_C"/>
</dbReference>
<dbReference type="InterPro" id="IPR022930">
    <property type="entry name" value="UPF0316"/>
</dbReference>
<dbReference type="NCBIfam" id="NF003191">
    <property type="entry name" value="PRK04164.1-2"/>
    <property type="match status" value="1"/>
</dbReference>
<dbReference type="PANTHER" id="PTHR40060">
    <property type="entry name" value="UPF0316 PROTEIN YEBE"/>
    <property type="match status" value="1"/>
</dbReference>
<dbReference type="PANTHER" id="PTHR40060:SF1">
    <property type="entry name" value="UPF0316 PROTEIN YEBE"/>
    <property type="match status" value="1"/>
</dbReference>
<dbReference type="Pfam" id="PF10035">
    <property type="entry name" value="DUF2179"/>
    <property type="match status" value="1"/>
</dbReference>
<dbReference type="Pfam" id="PF18955">
    <property type="entry name" value="DUF5698"/>
    <property type="match status" value="1"/>
</dbReference>
<comment type="subcellular location">
    <subcellularLocation>
        <location evidence="1">Cell membrane</location>
        <topology evidence="1">Multi-pass membrane protein</topology>
    </subcellularLocation>
</comment>
<comment type="similarity">
    <text evidence="1">Belongs to the UPF0316 family.</text>
</comment>
<organism>
    <name type="scientific">Syntrophotalea carbinolica (strain DSM 2380 / NBRC 103641 / GraBd1)</name>
    <name type="common">Pelobacter carbinolicus</name>
    <dbReference type="NCBI Taxonomy" id="338963"/>
    <lineage>
        <taxon>Bacteria</taxon>
        <taxon>Pseudomonadati</taxon>
        <taxon>Thermodesulfobacteriota</taxon>
        <taxon>Desulfuromonadia</taxon>
        <taxon>Desulfuromonadales</taxon>
        <taxon>Syntrophotaleaceae</taxon>
        <taxon>Syntrophotalea</taxon>
    </lineage>
</organism>